<proteinExistence type="evidence at protein level"/>
<keyword id="KW-1003">Cell membrane</keyword>
<keyword id="KW-0963">Cytoplasm</keyword>
<keyword id="KW-0433">Leucine-rich repeat</keyword>
<keyword id="KW-0472">Membrane</keyword>
<keyword id="KW-1185">Reference proteome</keyword>
<keyword id="KW-0677">Repeat</keyword>
<organism>
    <name type="scientific">Mus musculus</name>
    <name type="common">Mouse</name>
    <dbReference type="NCBI Taxonomy" id="10090"/>
    <lineage>
        <taxon>Eukaryota</taxon>
        <taxon>Metazoa</taxon>
        <taxon>Chordata</taxon>
        <taxon>Craniata</taxon>
        <taxon>Vertebrata</taxon>
        <taxon>Euteleostomi</taxon>
        <taxon>Mammalia</taxon>
        <taxon>Eutheria</taxon>
        <taxon>Euarchontoglires</taxon>
        <taxon>Glires</taxon>
        <taxon>Rodentia</taxon>
        <taxon>Myomorpha</taxon>
        <taxon>Muroidea</taxon>
        <taxon>Muridae</taxon>
        <taxon>Murinae</taxon>
        <taxon>Mus</taxon>
        <taxon>Mus</taxon>
    </lineage>
</organism>
<comment type="subcellular location">
    <subcellularLocation>
        <location evidence="1">Cytoplasm</location>
    </subcellularLocation>
    <subcellularLocation>
        <location evidence="1">Cell membrane</location>
    </subcellularLocation>
</comment>
<comment type="domain">
    <text evidence="1">The C-terminus is necessary for localization to the cell membrane.</text>
</comment>
<comment type="similarity">
    <text evidence="3">Belongs to the CARMIL family.</text>
</comment>
<comment type="sequence caution" evidence="3">
    <conflict type="miscellaneous discrepancy">
        <sequence resource="EMBL-CDS" id="BAD21414"/>
    </conflict>
    <text>The sequence differs from that shown because it seems to be derived from a pre-mRNA.</text>
</comment>
<accession>Q3UFQ8</accession>
<accession>Q6KAP3</accession>
<sequence length="1375" mass="150416">MAKASVELTRELQDSIRRCLSQGAVLQQHRVKLETKPKKFEDRVLALTSWRLHLFPLKVPAKVESSFNVLEIRAFNTLSQNQILVETERGTVSMRLPSAESVDQVTRHVSSALSKVCPGPGCLIRRGNADTPEGPRDTSPNSETSTSTTHSVCGGFSETYAALCDYNGLHCREEVQWDVDTIYHAEDNREFNLLDFSHLESRDLALMVAALAYNQWFTKLYCKDLRLGSEVLEQVLHTLSKSGSLEELVLDNAGLKTDFVQKLAGVFGENGSCVLHALILSHNPIEDKGFLSLSQQLLCFPTGLTKLCLAKTAISPRGLQALGQTFGANPAFASSLRYLDLSKNPGLLATDEANALYSFLAQPNALVHLDLSGTDCAVDMLLGALLHGCCSHLTYLNLARNSCSHRKGREAPPAFKQFFSSVYTLSHVNLSATRLPLEALRALLQGLSLNSHLSDLHLDLSSCELRSAGAQALQEQLGAVTCIGSLDLSDNGFDSDLLTLVPALGKNKSLKHLFLGKNFNVKAKTLEEILHKLVQLIQEEDCSLQSLSVADSRLKLRTSILINALGSNTCLAKVDLSGNGMEDIGAKMLSKALQINSSLRTILWDRNNTSALGFLDIARALESNHTLRFMSFPVSDISQAYRSAPERTEDVWQKIQWCLVRNNHSQTCPQEQAFRLQQGLVTSSAEQMLQRLCGRVQEEVRALRLCPLEPVQDELLYARDLIKDAKNSRALFPSLYELGHVLANDGPVRQRLESVASEVSKAVDKELQVILESMVSLTQELCPVAMRVAEGHNKMLSNVAERVTVPRNFIRGALLEQAGQDIQNKLDEVKLSVVTYLTNSIVDEILQELYHSHKSLARHLTQLRTLSDPPGGASQGQDPSSRGRGRNHDHEETDDELGTNIDTMAIKKQKRCRKIRPVSAFISGSPQDMESQLGSLGIPPGWFSGLGASQTTASGSWEGLSELPTHGYKLRHQTQGRPRPPRTTPPGPGRPSVPVPGPRQENGMATRLDEGLEDFFSRRVMDESSSYPRTLRTMRPGLSEPPLPPLQKKRRRGLFHFRRPRSFKGDRGPGSPTAGLLLPPPPPPPPTQESPPSPDPPSLGNNSSPCWSPEEESSLLPGFGGARGSSFCRKMGTERLEAGEGAPAPGTAQQPRVHGGVALPGLGRTKGWSFDGKREGTDPDQEDSTQAWQKRRSSDDAGPGAWKPPPPPQSSKPSFSAMRRAEATWHIAEESAANHSCQSPSPASQDGDEEKQGALFPERMVPTRNAKLQEPPIGPRPPKPVAVPRGRRAPQVPGGREETESSSAAPGANKPRLRLGSQQDQEEPEGQGPTDQGRRTAPLKPKRTRRAQSCDKLEPDRRQPPDPTGVCGTSEPGTD</sequence>
<name>CARL3_MOUSE</name>
<evidence type="ECO:0000250" key="1">
    <source>
        <dbReference type="UniProtKB" id="Q8ND23"/>
    </source>
</evidence>
<evidence type="ECO:0000256" key="2">
    <source>
        <dbReference type="SAM" id="MobiDB-lite"/>
    </source>
</evidence>
<evidence type="ECO:0000305" key="3"/>
<evidence type="ECO:0000312" key="4">
    <source>
        <dbReference type="MGI" id="MGI:2448573"/>
    </source>
</evidence>
<reference key="1">
    <citation type="journal article" date="2004" name="DNA Res.">
        <title>Prediction of the coding sequences of mouse homologues of FLJ genes: the complete nucleotide sequences of 110 mouse FLJ-homologous cDNAs identified by screening of terminal sequences of cDNA clones randomly sampled from size-fractionated libraries.</title>
        <authorList>
            <person name="Okazaki N."/>
            <person name="Kikuno R."/>
            <person name="Ohara R."/>
            <person name="Inamoto S."/>
            <person name="Koseki H."/>
            <person name="Hiraoka S."/>
            <person name="Saga Y."/>
            <person name="Kitamura H."/>
            <person name="Nakagawa T."/>
            <person name="Nagase T."/>
            <person name="Ohara O."/>
            <person name="Koga H."/>
        </authorList>
    </citation>
    <scope>NUCLEOTIDE SEQUENCE [LARGE SCALE MRNA]</scope>
</reference>
<reference key="2">
    <citation type="journal article" date="2005" name="Science">
        <title>The transcriptional landscape of the mammalian genome.</title>
        <authorList>
            <person name="Carninci P."/>
            <person name="Kasukawa T."/>
            <person name="Katayama S."/>
            <person name="Gough J."/>
            <person name="Frith M.C."/>
            <person name="Maeda N."/>
            <person name="Oyama R."/>
            <person name="Ravasi T."/>
            <person name="Lenhard B."/>
            <person name="Wells C."/>
            <person name="Kodzius R."/>
            <person name="Shimokawa K."/>
            <person name="Bajic V.B."/>
            <person name="Brenner S.E."/>
            <person name="Batalov S."/>
            <person name="Forrest A.R."/>
            <person name="Zavolan M."/>
            <person name="Davis M.J."/>
            <person name="Wilming L.G."/>
            <person name="Aidinis V."/>
            <person name="Allen J.E."/>
            <person name="Ambesi-Impiombato A."/>
            <person name="Apweiler R."/>
            <person name="Aturaliya R.N."/>
            <person name="Bailey T.L."/>
            <person name="Bansal M."/>
            <person name="Baxter L."/>
            <person name="Beisel K.W."/>
            <person name="Bersano T."/>
            <person name="Bono H."/>
            <person name="Chalk A.M."/>
            <person name="Chiu K.P."/>
            <person name="Choudhary V."/>
            <person name="Christoffels A."/>
            <person name="Clutterbuck D.R."/>
            <person name="Crowe M.L."/>
            <person name="Dalla E."/>
            <person name="Dalrymple B.P."/>
            <person name="de Bono B."/>
            <person name="Della Gatta G."/>
            <person name="di Bernardo D."/>
            <person name="Down T."/>
            <person name="Engstrom P."/>
            <person name="Fagiolini M."/>
            <person name="Faulkner G."/>
            <person name="Fletcher C.F."/>
            <person name="Fukushima T."/>
            <person name="Furuno M."/>
            <person name="Futaki S."/>
            <person name="Gariboldi M."/>
            <person name="Georgii-Hemming P."/>
            <person name="Gingeras T.R."/>
            <person name="Gojobori T."/>
            <person name="Green R.E."/>
            <person name="Gustincich S."/>
            <person name="Harbers M."/>
            <person name="Hayashi Y."/>
            <person name="Hensch T.K."/>
            <person name="Hirokawa N."/>
            <person name="Hill D."/>
            <person name="Huminiecki L."/>
            <person name="Iacono M."/>
            <person name="Ikeo K."/>
            <person name="Iwama A."/>
            <person name="Ishikawa T."/>
            <person name="Jakt M."/>
            <person name="Kanapin A."/>
            <person name="Katoh M."/>
            <person name="Kawasawa Y."/>
            <person name="Kelso J."/>
            <person name="Kitamura H."/>
            <person name="Kitano H."/>
            <person name="Kollias G."/>
            <person name="Krishnan S.P."/>
            <person name="Kruger A."/>
            <person name="Kummerfeld S.K."/>
            <person name="Kurochkin I.V."/>
            <person name="Lareau L.F."/>
            <person name="Lazarevic D."/>
            <person name="Lipovich L."/>
            <person name="Liu J."/>
            <person name="Liuni S."/>
            <person name="McWilliam S."/>
            <person name="Madan Babu M."/>
            <person name="Madera M."/>
            <person name="Marchionni L."/>
            <person name="Matsuda H."/>
            <person name="Matsuzawa S."/>
            <person name="Miki H."/>
            <person name="Mignone F."/>
            <person name="Miyake S."/>
            <person name="Morris K."/>
            <person name="Mottagui-Tabar S."/>
            <person name="Mulder N."/>
            <person name="Nakano N."/>
            <person name="Nakauchi H."/>
            <person name="Ng P."/>
            <person name="Nilsson R."/>
            <person name="Nishiguchi S."/>
            <person name="Nishikawa S."/>
            <person name="Nori F."/>
            <person name="Ohara O."/>
            <person name="Okazaki Y."/>
            <person name="Orlando V."/>
            <person name="Pang K.C."/>
            <person name="Pavan W.J."/>
            <person name="Pavesi G."/>
            <person name="Pesole G."/>
            <person name="Petrovsky N."/>
            <person name="Piazza S."/>
            <person name="Reed J."/>
            <person name="Reid J.F."/>
            <person name="Ring B.Z."/>
            <person name="Ringwald M."/>
            <person name="Rost B."/>
            <person name="Ruan Y."/>
            <person name="Salzberg S.L."/>
            <person name="Sandelin A."/>
            <person name="Schneider C."/>
            <person name="Schoenbach C."/>
            <person name="Sekiguchi K."/>
            <person name="Semple C.A."/>
            <person name="Seno S."/>
            <person name="Sessa L."/>
            <person name="Sheng Y."/>
            <person name="Shibata Y."/>
            <person name="Shimada H."/>
            <person name="Shimada K."/>
            <person name="Silva D."/>
            <person name="Sinclair B."/>
            <person name="Sperling S."/>
            <person name="Stupka E."/>
            <person name="Sugiura K."/>
            <person name="Sultana R."/>
            <person name="Takenaka Y."/>
            <person name="Taki K."/>
            <person name="Tammoja K."/>
            <person name="Tan S.L."/>
            <person name="Tang S."/>
            <person name="Taylor M.S."/>
            <person name="Tegner J."/>
            <person name="Teichmann S.A."/>
            <person name="Ueda H.R."/>
            <person name="van Nimwegen E."/>
            <person name="Verardo R."/>
            <person name="Wei C.L."/>
            <person name="Yagi K."/>
            <person name="Yamanishi H."/>
            <person name="Zabarovsky E."/>
            <person name="Zhu S."/>
            <person name="Zimmer A."/>
            <person name="Hide W."/>
            <person name="Bult C."/>
            <person name="Grimmond S.M."/>
            <person name="Teasdale R.D."/>
            <person name="Liu E.T."/>
            <person name="Brusic V."/>
            <person name="Quackenbush J."/>
            <person name="Wahlestedt C."/>
            <person name="Mattick J.S."/>
            <person name="Hume D.A."/>
            <person name="Kai C."/>
            <person name="Sasaki D."/>
            <person name="Tomaru Y."/>
            <person name="Fukuda S."/>
            <person name="Kanamori-Katayama M."/>
            <person name="Suzuki M."/>
            <person name="Aoki J."/>
            <person name="Arakawa T."/>
            <person name="Iida J."/>
            <person name="Imamura K."/>
            <person name="Itoh M."/>
            <person name="Kato T."/>
            <person name="Kawaji H."/>
            <person name="Kawagashira N."/>
            <person name="Kawashima T."/>
            <person name="Kojima M."/>
            <person name="Kondo S."/>
            <person name="Konno H."/>
            <person name="Nakano K."/>
            <person name="Ninomiya N."/>
            <person name="Nishio T."/>
            <person name="Okada M."/>
            <person name="Plessy C."/>
            <person name="Shibata K."/>
            <person name="Shiraki T."/>
            <person name="Suzuki S."/>
            <person name="Tagami M."/>
            <person name="Waki K."/>
            <person name="Watahiki A."/>
            <person name="Okamura-Oho Y."/>
            <person name="Suzuki H."/>
            <person name="Kawai J."/>
            <person name="Hayashizaki Y."/>
        </authorList>
    </citation>
    <scope>NUCLEOTIDE SEQUENCE [LARGE SCALE MRNA] OF 1-898</scope>
    <source>
        <strain>C57BL/6J</strain>
    </source>
</reference>
<reference key="3">
    <citation type="journal article" date="2010" name="Cell">
        <title>A tissue-specific atlas of mouse protein phosphorylation and expression.</title>
        <authorList>
            <person name="Huttlin E.L."/>
            <person name="Jedrychowski M.P."/>
            <person name="Elias J.E."/>
            <person name="Goswami T."/>
            <person name="Rad R."/>
            <person name="Beausoleil S.A."/>
            <person name="Villen J."/>
            <person name="Haas W."/>
            <person name="Sowa M.E."/>
            <person name="Gygi S.P."/>
        </authorList>
    </citation>
    <scope>IDENTIFICATION BY MASS SPECTROMETRY [LARGE SCALE ANALYSIS]</scope>
    <source>
        <tissue>Brain</tissue>
    </source>
</reference>
<feature type="chain" id="PRO_0000324609" description="Capping protein, Arp2/3 and myosin-I linker protein 3">
    <location>
        <begin position="1"/>
        <end position="1375"/>
    </location>
</feature>
<feature type="repeat" description="LRR 1">
    <location>
        <begin position="244"/>
        <end position="264"/>
    </location>
</feature>
<feature type="repeat" description="LRR 2">
    <location>
        <begin position="274"/>
        <end position="295"/>
    </location>
</feature>
<feature type="repeat" description="LRR 3">
    <location>
        <begin position="303"/>
        <end position="323"/>
    </location>
</feature>
<feature type="repeat" description="LRR 4">
    <location>
        <begin position="335"/>
        <end position="357"/>
    </location>
</feature>
<feature type="repeat" description="LRR 5">
    <location>
        <begin position="365"/>
        <end position="386"/>
    </location>
</feature>
<feature type="repeat" description="LRR 6">
    <location>
        <begin position="392"/>
        <end position="413"/>
    </location>
</feature>
<feature type="repeat" description="LRR 7">
    <location>
        <begin position="424"/>
        <end position="444"/>
    </location>
</feature>
<feature type="repeat" description="LRR 8">
    <location>
        <begin position="455"/>
        <end position="475"/>
    </location>
</feature>
<feature type="repeat" description="LRR 9">
    <location>
        <begin position="482"/>
        <end position="501"/>
    </location>
</feature>
<feature type="repeat" description="LRR 10">
    <location>
        <begin position="509"/>
        <end position="530"/>
    </location>
</feature>
<feature type="region of interest" description="Disordered" evidence="2">
    <location>
        <begin position="124"/>
        <end position="151"/>
    </location>
</feature>
<feature type="region of interest" description="Disordered" evidence="2">
    <location>
        <begin position="864"/>
        <end position="901"/>
    </location>
</feature>
<feature type="region of interest" description="Disordered" evidence="2">
    <location>
        <begin position="969"/>
        <end position="1375"/>
    </location>
</feature>
<feature type="compositionally biased region" description="Low complexity" evidence="2">
    <location>
        <begin position="138"/>
        <end position="151"/>
    </location>
</feature>
<feature type="compositionally biased region" description="Pro residues" evidence="2">
    <location>
        <begin position="981"/>
        <end position="997"/>
    </location>
</feature>
<feature type="compositionally biased region" description="Basic and acidic residues" evidence="2">
    <location>
        <begin position="1007"/>
        <end position="1022"/>
    </location>
</feature>
<feature type="compositionally biased region" description="Basic residues" evidence="2">
    <location>
        <begin position="1047"/>
        <end position="1062"/>
    </location>
</feature>
<feature type="compositionally biased region" description="Pro residues" evidence="2">
    <location>
        <begin position="1078"/>
        <end position="1097"/>
    </location>
</feature>
<feature type="compositionally biased region" description="Low complexity" evidence="2">
    <location>
        <begin position="1098"/>
        <end position="1108"/>
    </location>
</feature>
<feature type="compositionally biased region" description="Basic and acidic residues" evidence="2">
    <location>
        <begin position="1219"/>
        <end position="1229"/>
    </location>
</feature>
<feature type="compositionally biased region" description="Polar residues" evidence="2">
    <location>
        <begin position="1233"/>
        <end position="1244"/>
    </location>
</feature>
<feature type="compositionally biased region" description="Pro residues" evidence="2">
    <location>
        <begin position="1272"/>
        <end position="1281"/>
    </location>
</feature>
<feature type="compositionally biased region" description="Basic and acidic residues" evidence="2">
    <location>
        <begin position="1348"/>
        <end position="1360"/>
    </location>
</feature>
<protein>
    <recommendedName>
        <fullName evidence="1">Capping protein, Arp2/3 and myosin-I linker protein 3</fullName>
    </recommendedName>
    <alternativeName>
        <fullName>Capping protein regulator and myosin 1 linker protein 3</fullName>
    </alternativeName>
    <alternativeName>
        <fullName evidence="4">Leucine-rich repeat-containing protein 16B</fullName>
    </alternativeName>
</protein>
<dbReference type="EMBL" id="AK131164">
    <property type="protein sequence ID" value="BAD21414.1"/>
    <property type="status" value="ALT_SEQ"/>
    <property type="molecule type" value="Transcribed_RNA"/>
</dbReference>
<dbReference type="EMBL" id="AK148355">
    <property type="protein sequence ID" value="BAE28502.1"/>
    <property type="molecule type" value="mRNA"/>
</dbReference>
<dbReference type="CCDS" id="CCDS36930.1"/>
<dbReference type="RefSeq" id="NP_001019816.1">
    <property type="nucleotide sequence ID" value="NM_001024645.2"/>
</dbReference>
<dbReference type="SMR" id="Q3UFQ8"/>
<dbReference type="BioGRID" id="234547">
    <property type="interactions" value="3"/>
</dbReference>
<dbReference type="FunCoup" id="Q3UFQ8">
    <property type="interactions" value="661"/>
</dbReference>
<dbReference type="IntAct" id="Q3UFQ8">
    <property type="interactions" value="2"/>
</dbReference>
<dbReference type="MINT" id="Q3UFQ8"/>
<dbReference type="STRING" id="10090.ENSMUSP00000075587"/>
<dbReference type="GlyGen" id="Q3UFQ8">
    <property type="glycosylation" value="2 sites, 1 N-linked glycan (1 site)"/>
</dbReference>
<dbReference type="iPTMnet" id="Q3UFQ8"/>
<dbReference type="PhosphoSitePlus" id="Q3UFQ8"/>
<dbReference type="PaxDb" id="10090-ENSMUSP00000075587"/>
<dbReference type="ProteomicsDB" id="265436"/>
<dbReference type="Antibodypedia" id="22575">
    <property type="antibodies" value="40 antibodies from 12 providers"/>
</dbReference>
<dbReference type="DNASU" id="268747"/>
<dbReference type="Ensembl" id="ENSMUST00000076236.7">
    <property type="protein sequence ID" value="ENSMUSP00000075587.6"/>
    <property type="gene ID" value="ENSMUSG00000022211.10"/>
</dbReference>
<dbReference type="GeneID" id="268747"/>
<dbReference type="KEGG" id="mmu:268747"/>
<dbReference type="UCSC" id="uc007tyo.1">
    <property type="organism name" value="mouse"/>
</dbReference>
<dbReference type="AGR" id="MGI:2448573"/>
<dbReference type="CTD" id="90668"/>
<dbReference type="MGI" id="MGI:2448573">
    <property type="gene designation" value="Carmil3"/>
</dbReference>
<dbReference type="VEuPathDB" id="HostDB:ENSMUSG00000022211"/>
<dbReference type="eggNOG" id="KOG4242">
    <property type="taxonomic scope" value="Eukaryota"/>
</dbReference>
<dbReference type="GeneTree" id="ENSGT00940000157990"/>
<dbReference type="HOGENOM" id="CLU_003119_3_2_1"/>
<dbReference type="InParanoid" id="Q3UFQ8"/>
<dbReference type="OMA" id="NTHPEMQ"/>
<dbReference type="OrthoDB" id="18598at2759"/>
<dbReference type="PhylomeDB" id="Q3UFQ8"/>
<dbReference type="TreeFam" id="TF316381"/>
<dbReference type="BioGRID-ORCS" id="268747">
    <property type="hits" value="1 hit in 79 CRISPR screens"/>
</dbReference>
<dbReference type="ChiTaRS" id="Lrrc16b">
    <property type="organism name" value="mouse"/>
</dbReference>
<dbReference type="PRO" id="PR:Q3UFQ8"/>
<dbReference type="Proteomes" id="UP000000589">
    <property type="component" value="Chromosome 14"/>
</dbReference>
<dbReference type="RNAct" id="Q3UFQ8">
    <property type="molecule type" value="protein"/>
</dbReference>
<dbReference type="Bgee" id="ENSMUSG00000022211">
    <property type="expression patterns" value="Expressed in embryonic brain and 157 other cell types or tissues"/>
</dbReference>
<dbReference type="ExpressionAtlas" id="Q3UFQ8">
    <property type="expression patterns" value="baseline and differential"/>
</dbReference>
<dbReference type="GO" id="GO:0005737">
    <property type="term" value="C:cytoplasm"/>
    <property type="evidence" value="ECO:0000250"/>
    <property type="project" value="UniProtKB"/>
</dbReference>
<dbReference type="GO" id="GO:0098978">
    <property type="term" value="C:glutamatergic synapse"/>
    <property type="evidence" value="ECO:0000314"/>
    <property type="project" value="SynGO"/>
</dbReference>
<dbReference type="GO" id="GO:0005886">
    <property type="term" value="C:plasma membrane"/>
    <property type="evidence" value="ECO:0000250"/>
    <property type="project" value="UniProtKB"/>
</dbReference>
<dbReference type="GO" id="GO:0098794">
    <property type="term" value="C:postsynapse"/>
    <property type="evidence" value="ECO:0000314"/>
    <property type="project" value="SynGO"/>
</dbReference>
<dbReference type="GO" id="GO:0150052">
    <property type="term" value="P:regulation of postsynapse assembly"/>
    <property type="evidence" value="ECO:0000314"/>
    <property type="project" value="SynGO"/>
</dbReference>
<dbReference type="FunFam" id="2.30.29.30:FF:000266">
    <property type="entry name" value="Capping protein, Arp2/3 and myosin-I linker protein 3"/>
    <property type="match status" value="1"/>
</dbReference>
<dbReference type="FunFam" id="3.80.10.10:FF:000009">
    <property type="entry name" value="F-actin-uncapping protein LRRC16A isoform X1"/>
    <property type="match status" value="1"/>
</dbReference>
<dbReference type="Gene3D" id="2.30.29.30">
    <property type="entry name" value="Pleckstrin-homology domain (PH domain)/Phosphotyrosine-binding domain (PTB)"/>
    <property type="match status" value="1"/>
</dbReference>
<dbReference type="Gene3D" id="3.80.10.10">
    <property type="entry name" value="Ribonuclease Inhibitor"/>
    <property type="match status" value="1"/>
</dbReference>
<dbReference type="InterPro" id="IPR031943">
    <property type="entry name" value="CARMIL_C"/>
</dbReference>
<dbReference type="InterPro" id="IPR041245">
    <property type="entry name" value="CARMIL_PH"/>
</dbReference>
<dbReference type="InterPro" id="IPR001611">
    <property type="entry name" value="Leu-rich_rpt"/>
</dbReference>
<dbReference type="InterPro" id="IPR032675">
    <property type="entry name" value="LRR_dom_sf"/>
</dbReference>
<dbReference type="InterPro" id="IPR011993">
    <property type="entry name" value="PH-like_dom_sf"/>
</dbReference>
<dbReference type="InterPro" id="IPR051279">
    <property type="entry name" value="PP1-Reg/Actin-Interact_Protein"/>
</dbReference>
<dbReference type="PANTHER" id="PTHR24112:SF43">
    <property type="entry name" value="CAPPING PROTEIN, ARP2_3 AND MYOSIN-I LINKER PROTEIN 3"/>
    <property type="match status" value="1"/>
</dbReference>
<dbReference type="PANTHER" id="PTHR24112">
    <property type="entry name" value="LEUCINE-RICH REPEAT, ISOFORM F-RELATED"/>
    <property type="match status" value="1"/>
</dbReference>
<dbReference type="Pfam" id="PF17888">
    <property type="entry name" value="Carm_PH"/>
    <property type="match status" value="1"/>
</dbReference>
<dbReference type="Pfam" id="PF16000">
    <property type="entry name" value="CARMIL_C"/>
    <property type="match status" value="1"/>
</dbReference>
<dbReference type="Pfam" id="PF13516">
    <property type="entry name" value="LRR_6"/>
    <property type="match status" value="3"/>
</dbReference>
<dbReference type="SMART" id="SM00368">
    <property type="entry name" value="LRR_RI"/>
    <property type="match status" value="4"/>
</dbReference>
<dbReference type="SUPFAM" id="SSF52047">
    <property type="entry name" value="RNI-like"/>
    <property type="match status" value="2"/>
</dbReference>
<gene>
    <name type="primary">Carmil3</name>
    <name evidence="4" type="synonym">Lrrc16b</name>
</gene>